<comment type="function">
    <text evidence="1">Necessary for the introduction of cis unsaturation into fatty acids. Catalyzes the dehydration of (3R)-3-hydroxydecanoyl-ACP to E-(2)-decenoyl-ACP and then its isomerization to Z-(3)-decenoyl-ACP. Can catalyze the dehydratase reaction for beta-hydroxyacyl-ACPs with saturated chain lengths up to 16:0, being most active on intermediate chain length.</text>
</comment>
<comment type="catalytic activity">
    <reaction evidence="1">
        <text>a (3R)-hydroxyacyl-[ACP] = a (2E)-enoyl-[ACP] + H2O</text>
        <dbReference type="Rhea" id="RHEA:13097"/>
        <dbReference type="Rhea" id="RHEA-COMP:9925"/>
        <dbReference type="Rhea" id="RHEA-COMP:9945"/>
        <dbReference type="ChEBI" id="CHEBI:15377"/>
        <dbReference type="ChEBI" id="CHEBI:78784"/>
        <dbReference type="ChEBI" id="CHEBI:78827"/>
        <dbReference type="EC" id="4.2.1.59"/>
    </reaction>
</comment>
<comment type="catalytic activity">
    <reaction evidence="1">
        <text>(3R)-hydroxydecanoyl-[ACP] = (2E)-decenoyl-[ACP] + H2O</text>
        <dbReference type="Rhea" id="RHEA:41860"/>
        <dbReference type="Rhea" id="RHEA-COMP:9638"/>
        <dbReference type="Rhea" id="RHEA-COMP:9639"/>
        <dbReference type="ChEBI" id="CHEBI:15377"/>
        <dbReference type="ChEBI" id="CHEBI:78466"/>
        <dbReference type="ChEBI" id="CHEBI:78467"/>
    </reaction>
</comment>
<comment type="catalytic activity">
    <reaction evidence="1">
        <text>(2E)-decenoyl-[ACP] = (3Z)-decenoyl-[ACP]</text>
        <dbReference type="Rhea" id="RHEA:23568"/>
        <dbReference type="Rhea" id="RHEA-COMP:9639"/>
        <dbReference type="Rhea" id="RHEA-COMP:9927"/>
        <dbReference type="ChEBI" id="CHEBI:78467"/>
        <dbReference type="ChEBI" id="CHEBI:78798"/>
        <dbReference type="EC" id="5.3.3.14"/>
    </reaction>
</comment>
<comment type="pathway">
    <text evidence="1">Lipid metabolism; fatty acid biosynthesis.</text>
</comment>
<comment type="subunit">
    <text evidence="1">Homodimer.</text>
</comment>
<comment type="subcellular location">
    <subcellularLocation>
        <location evidence="1">Cytoplasm</location>
    </subcellularLocation>
</comment>
<comment type="similarity">
    <text evidence="1">Belongs to the thioester dehydratase family. FabA subfamily.</text>
</comment>
<reference key="1">
    <citation type="journal article" date="2008" name="J. Biotechnol.">
        <title>The genome of Xanthomonas campestris pv. campestris B100 and its use for the reconstruction of metabolic pathways involved in xanthan biosynthesis.</title>
        <authorList>
            <person name="Vorhoelter F.-J."/>
            <person name="Schneiker S."/>
            <person name="Goesmann A."/>
            <person name="Krause L."/>
            <person name="Bekel T."/>
            <person name="Kaiser O."/>
            <person name="Linke B."/>
            <person name="Patschkowski T."/>
            <person name="Rueckert C."/>
            <person name="Schmid J."/>
            <person name="Sidhu V.K."/>
            <person name="Sieber V."/>
            <person name="Tauch A."/>
            <person name="Watt S.A."/>
            <person name="Weisshaar B."/>
            <person name="Becker A."/>
            <person name="Niehaus K."/>
            <person name="Puehler A."/>
        </authorList>
    </citation>
    <scope>NUCLEOTIDE SEQUENCE [LARGE SCALE GENOMIC DNA]</scope>
    <source>
        <strain>B100</strain>
    </source>
</reference>
<accession>B0RVP4</accession>
<evidence type="ECO:0000255" key="1">
    <source>
        <dbReference type="HAMAP-Rule" id="MF_00405"/>
    </source>
</evidence>
<keyword id="KW-0963">Cytoplasm</keyword>
<keyword id="KW-0275">Fatty acid biosynthesis</keyword>
<keyword id="KW-0276">Fatty acid metabolism</keyword>
<keyword id="KW-0413">Isomerase</keyword>
<keyword id="KW-0444">Lipid biosynthesis</keyword>
<keyword id="KW-0443">Lipid metabolism</keyword>
<keyword id="KW-0456">Lyase</keyword>
<protein>
    <recommendedName>
        <fullName evidence="1">3-hydroxydecanoyl-[acyl-carrier-protein] dehydratase</fullName>
        <ecNumber evidence="1">4.2.1.59</ecNumber>
    </recommendedName>
    <alternativeName>
        <fullName evidence="1">3-hydroxyacyl-[acyl-carrier-protein] dehydratase FabA</fullName>
    </alternativeName>
    <alternativeName>
        <fullName evidence="1">Beta-hydroxydecanoyl thioester dehydrase</fullName>
    </alternativeName>
    <alternativeName>
        <fullName evidence="1">Trans-2-decenoyl-[acyl-carrier-protein] isomerase</fullName>
        <ecNumber evidence="1">5.3.3.14</ecNumber>
    </alternativeName>
</protein>
<gene>
    <name evidence="1" type="primary">fabA</name>
    <name type="ordered locus">xcc-b100_3768</name>
</gene>
<organism>
    <name type="scientific">Xanthomonas campestris pv. campestris (strain B100)</name>
    <dbReference type="NCBI Taxonomy" id="509169"/>
    <lineage>
        <taxon>Bacteria</taxon>
        <taxon>Pseudomonadati</taxon>
        <taxon>Pseudomonadota</taxon>
        <taxon>Gammaproteobacteria</taxon>
        <taxon>Lysobacterales</taxon>
        <taxon>Lysobacteraceae</taxon>
        <taxon>Xanthomonas</taxon>
    </lineage>
</organism>
<feature type="chain" id="PRO_1000201227" description="3-hydroxydecanoyl-[acyl-carrier-protein] dehydratase">
    <location>
        <begin position="1"/>
        <end position="171"/>
    </location>
</feature>
<feature type="active site" evidence="1">
    <location>
        <position position="70"/>
    </location>
</feature>
<dbReference type="EC" id="4.2.1.59" evidence="1"/>
<dbReference type="EC" id="5.3.3.14" evidence="1"/>
<dbReference type="EMBL" id="AM920689">
    <property type="protein sequence ID" value="CAP53135.1"/>
    <property type="molecule type" value="Genomic_DNA"/>
</dbReference>
<dbReference type="SMR" id="B0RVP4"/>
<dbReference type="KEGG" id="xca:xcc-b100_3768"/>
<dbReference type="HOGENOM" id="CLU_097925_0_0_6"/>
<dbReference type="UniPathway" id="UPA00094"/>
<dbReference type="Proteomes" id="UP000001188">
    <property type="component" value="Chromosome"/>
</dbReference>
<dbReference type="GO" id="GO:0005737">
    <property type="term" value="C:cytoplasm"/>
    <property type="evidence" value="ECO:0007669"/>
    <property type="project" value="UniProtKB-SubCell"/>
</dbReference>
<dbReference type="GO" id="GO:0019171">
    <property type="term" value="F:(3R)-hydroxyacyl-[acyl-carrier-protein] dehydratase activity"/>
    <property type="evidence" value="ECO:0007669"/>
    <property type="project" value="UniProtKB-UniRule"/>
</dbReference>
<dbReference type="GO" id="GO:0034017">
    <property type="term" value="F:trans-2-decenoyl-acyl-carrier-protein isomerase activity"/>
    <property type="evidence" value="ECO:0007669"/>
    <property type="project" value="UniProtKB-UniRule"/>
</dbReference>
<dbReference type="GO" id="GO:0006636">
    <property type="term" value="P:unsaturated fatty acid biosynthetic process"/>
    <property type="evidence" value="ECO:0007669"/>
    <property type="project" value="UniProtKB-UniRule"/>
</dbReference>
<dbReference type="CDD" id="cd01287">
    <property type="entry name" value="FabA"/>
    <property type="match status" value="1"/>
</dbReference>
<dbReference type="Gene3D" id="3.10.129.10">
    <property type="entry name" value="Hotdog Thioesterase"/>
    <property type="match status" value="1"/>
</dbReference>
<dbReference type="HAMAP" id="MF_00405">
    <property type="entry name" value="FabA"/>
    <property type="match status" value="1"/>
</dbReference>
<dbReference type="InterPro" id="IPR010083">
    <property type="entry name" value="FabA"/>
</dbReference>
<dbReference type="InterPro" id="IPR013114">
    <property type="entry name" value="FabA_FabZ"/>
</dbReference>
<dbReference type="InterPro" id="IPR029069">
    <property type="entry name" value="HotDog_dom_sf"/>
</dbReference>
<dbReference type="NCBIfam" id="TIGR01749">
    <property type="entry name" value="fabA"/>
    <property type="match status" value="1"/>
</dbReference>
<dbReference type="NCBIfam" id="NF003509">
    <property type="entry name" value="PRK05174.1"/>
    <property type="match status" value="1"/>
</dbReference>
<dbReference type="PANTHER" id="PTHR30272">
    <property type="entry name" value="3-HYDROXYACYL-[ACYL-CARRIER-PROTEIN] DEHYDRATASE"/>
    <property type="match status" value="1"/>
</dbReference>
<dbReference type="PANTHER" id="PTHR30272:SF8">
    <property type="entry name" value="3-HYDROXYDECANOYL-[ACYL-CARRIER-PROTEIN] DEHYDRATASE"/>
    <property type="match status" value="1"/>
</dbReference>
<dbReference type="Pfam" id="PF07977">
    <property type="entry name" value="FabA"/>
    <property type="match status" value="1"/>
</dbReference>
<dbReference type="SUPFAM" id="SSF54637">
    <property type="entry name" value="Thioesterase/thiol ester dehydrase-isomerase"/>
    <property type="match status" value="1"/>
</dbReference>
<proteinExistence type="inferred from homology"/>
<sequence>MTRQNAYSRDQLLASARGELFGPNSGRLPNDPMLMFDRITEINDNGGSHGKGLIRAELDIRPDLWFFNCHFIGDPVMPGCLGLDAMWQLTGFFLTWIGAPGRGRALGCGEVKFTGQVLPTATLVTYEIEISRVINRKLVMAQSDARMLVDGREIYAAKDLRVGMFTSTENF</sequence>
<name>FABA_XANCB</name>